<reference key="1">
    <citation type="journal article" date="2004" name="Proc. Natl. Acad. Sci. U.S.A.">
        <title>The complete genomic sequence of Nocardia farcinica IFM 10152.</title>
        <authorList>
            <person name="Ishikawa J."/>
            <person name="Yamashita A."/>
            <person name="Mikami Y."/>
            <person name="Hoshino Y."/>
            <person name="Kurita H."/>
            <person name="Hotta K."/>
            <person name="Shiba T."/>
            <person name="Hattori M."/>
        </authorList>
    </citation>
    <scope>NUCLEOTIDE SEQUENCE [LARGE SCALE GENOMIC DNA]</scope>
    <source>
        <strain>IFM 10152</strain>
    </source>
</reference>
<accession>Q5Z1K8</accession>
<feature type="chain" id="PRO_1000055893" description="Large ribosomal subunit protein bL17">
    <location>
        <begin position="1"/>
        <end position="178"/>
    </location>
</feature>
<feature type="region of interest" description="Disordered" evidence="2">
    <location>
        <begin position="126"/>
        <end position="178"/>
    </location>
</feature>
<feature type="compositionally biased region" description="Basic and acidic residues" evidence="2">
    <location>
        <begin position="126"/>
        <end position="139"/>
    </location>
</feature>
<feature type="compositionally biased region" description="Low complexity" evidence="2">
    <location>
        <begin position="140"/>
        <end position="163"/>
    </location>
</feature>
<feature type="compositionally biased region" description="Basic and acidic residues" evidence="2">
    <location>
        <begin position="164"/>
        <end position="178"/>
    </location>
</feature>
<organism>
    <name type="scientific">Nocardia farcinica (strain IFM 10152)</name>
    <dbReference type="NCBI Taxonomy" id="247156"/>
    <lineage>
        <taxon>Bacteria</taxon>
        <taxon>Bacillati</taxon>
        <taxon>Actinomycetota</taxon>
        <taxon>Actinomycetes</taxon>
        <taxon>Mycobacteriales</taxon>
        <taxon>Nocardiaceae</taxon>
        <taxon>Nocardia</taxon>
    </lineage>
</organism>
<keyword id="KW-1185">Reference proteome</keyword>
<keyword id="KW-0687">Ribonucleoprotein</keyword>
<keyword id="KW-0689">Ribosomal protein</keyword>
<evidence type="ECO:0000255" key="1">
    <source>
        <dbReference type="HAMAP-Rule" id="MF_01368"/>
    </source>
</evidence>
<evidence type="ECO:0000256" key="2">
    <source>
        <dbReference type="SAM" id="MobiDB-lite"/>
    </source>
</evidence>
<evidence type="ECO:0000305" key="3"/>
<dbReference type="EMBL" id="AP006618">
    <property type="protein sequence ID" value="BAD55683.1"/>
    <property type="molecule type" value="Genomic_DNA"/>
</dbReference>
<dbReference type="RefSeq" id="WP_011207368.1">
    <property type="nucleotide sequence ID" value="NC_006361.1"/>
</dbReference>
<dbReference type="SMR" id="Q5Z1K8"/>
<dbReference type="STRING" id="247156.NFA_8380"/>
<dbReference type="GeneID" id="61131666"/>
<dbReference type="KEGG" id="nfa:NFA_8380"/>
<dbReference type="eggNOG" id="COG0203">
    <property type="taxonomic scope" value="Bacteria"/>
</dbReference>
<dbReference type="HOGENOM" id="CLU_074407_0_0_11"/>
<dbReference type="OrthoDB" id="9809073at2"/>
<dbReference type="Proteomes" id="UP000006820">
    <property type="component" value="Chromosome"/>
</dbReference>
<dbReference type="GO" id="GO:0022625">
    <property type="term" value="C:cytosolic large ribosomal subunit"/>
    <property type="evidence" value="ECO:0007669"/>
    <property type="project" value="TreeGrafter"/>
</dbReference>
<dbReference type="GO" id="GO:0003735">
    <property type="term" value="F:structural constituent of ribosome"/>
    <property type="evidence" value="ECO:0007669"/>
    <property type="project" value="InterPro"/>
</dbReference>
<dbReference type="GO" id="GO:0006412">
    <property type="term" value="P:translation"/>
    <property type="evidence" value="ECO:0007669"/>
    <property type="project" value="UniProtKB-UniRule"/>
</dbReference>
<dbReference type="FunFam" id="3.90.1030.10:FF:000001">
    <property type="entry name" value="50S ribosomal protein L17"/>
    <property type="match status" value="1"/>
</dbReference>
<dbReference type="Gene3D" id="3.90.1030.10">
    <property type="entry name" value="Ribosomal protein L17"/>
    <property type="match status" value="1"/>
</dbReference>
<dbReference type="HAMAP" id="MF_01368">
    <property type="entry name" value="Ribosomal_bL17"/>
    <property type="match status" value="1"/>
</dbReference>
<dbReference type="InterPro" id="IPR000456">
    <property type="entry name" value="Ribosomal_bL17"/>
</dbReference>
<dbReference type="InterPro" id="IPR047859">
    <property type="entry name" value="Ribosomal_bL17_CS"/>
</dbReference>
<dbReference type="InterPro" id="IPR036373">
    <property type="entry name" value="Ribosomal_bL17_sf"/>
</dbReference>
<dbReference type="NCBIfam" id="TIGR00059">
    <property type="entry name" value="L17"/>
    <property type="match status" value="1"/>
</dbReference>
<dbReference type="PANTHER" id="PTHR14413:SF16">
    <property type="entry name" value="LARGE RIBOSOMAL SUBUNIT PROTEIN BL17M"/>
    <property type="match status" value="1"/>
</dbReference>
<dbReference type="PANTHER" id="PTHR14413">
    <property type="entry name" value="RIBOSOMAL PROTEIN L17"/>
    <property type="match status" value="1"/>
</dbReference>
<dbReference type="Pfam" id="PF01196">
    <property type="entry name" value="Ribosomal_L17"/>
    <property type="match status" value="1"/>
</dbReference>
<dbReference type="SUPFAM" id="SSF64263">
    <property type="entry name" value="Prokaryotic ribosomal protein L17"/>
    <property type="match status" value="1"/>
</dbReference>
<dbReference type="PROSITE" id="PS01167">
    <property type="entry name" value="RIBOSOMAL_L17"/>
    <property type="match status" value="1"/>
</dbReference>
<comment type="subunit">
    <text evidence="1">Part of the 50S ribosomal subunit. Contacts protein L32.</text>
</comment>
<comment type="similarity">
    <text evidence="1">Belongs to the bacterial ribosomal protein bL17 family.</text>
</comment>
<name>RL17_NOCFA</name>
<gene>
    <name evidence="1" type="primary">rplQ</name>
    <name type="ordered locus">NFA_8380</name>
</gene>
<sequence>MPKPKKGARFGGSASHQKAIFANLATALFEHGRITTTEAKAKAVRPYAEKLITKAKAGTLADRREVLKVIRNKDVVHSLFAEIGPSFEGREGGYTRITKTLPRKGDNAPMAIIELVREKTVTNEADRARRVAASKKAEEQAPAAEAEEQAPAAEAEAPAADAAAEAKADEAAEDKKDA</sequence>
<proteinExistence type="inferred from homology"/>
<protein>
    <recommendedName>
        <fullName evidence="1">Large ribosomal subunit protein bL17</fullName>
    </recommendedName>
    <alternativeName>
        <fullName evidence="3">50S ribosomal protein L17</fullName>
    </alternativeName>
</protein>